<evidence type="ECO:0000255" key="1">
    <source>
        <dbReference type="HAMAP-Rule" id="MF_01212"/>
    </source>
</evidence>
<evidence type="ECO:0000255" key="2">
    <source>
        <dbReference type="PROSITE-ProRule" id="PRU01175"/>
    </source>
</evidence>
<gene>
    <name type="ordered locus">VV1_0014</name>
</gene>
<proteinExistence type="inferred from homology"/>
<feature type="chain" id="PRO_0000205325" description="Deoxyguanosinetriphosphate triphosphohydrolase-like protein">
    <location>
        <begin position="1"/>
        <end position="443"/>
    </location>
</feature>
<feature type="domain" description="HD" evidence="2">
    <location>
        <begin position="66"/>
        <end position="259"/>
    </location>
</feature>
<protein>
    <recommendedName>
        <fullName evidence="1">Deoxyguanosinetriphosphate triphosphohydrolase-like protein</fullName>
    </recommendedName>
</protein>
<organism>
    <name type="scientific">Vibrio vulnificus (strain CMCP6)</name>
    <dbReference type="NCBI Taxonomy" id="216895"/>
    <lineage>
        <taxon>Bacteria</taxon>
        <taxon>Pseudomonadati</taxon>
        <taxon>Pseudomonadota</taxon>
        <taxon>Gammaproteobacteria</taxon>
        <taxon>Vibrionales</taxon>
        <taxon>Vibrionaceae</taxon>
        <taxon>Vibrio</taxon>
    </lineage>
</organism>
<reference key="1">
    <citation type="submission" date="2002-12" db="EMBL/GenBank/DDBJ databases">
        <title>Complete genome sequence of Vibrio vulnificus CMCP6.</title>
        <authorList>
            <person name="Rhee J.H."/>
            <person name="Kim S.Y."/>
            <person name="Chung S.S."/>
            <person name="Kim J.J."/>
            <person name="Moon Y.H."/>
            <person name="Jeong H."/>
            <person name="Choy H.E."/>
        </authorList>
    </citation>
    <scope>NUCLEOTIDE SEQUENCE [LARGE SCALE GENOMIC DNA]</scope>
    <source>
        <strain>CMCP6</strain>
    </source>
</reference>
<comment type="similarity">
    <text evidence="1">Belongs to the dGTPase family. Type 2 subfamily.</text>
</comment>
<name>DGTL1_VIBVU</name>
<accession>Q8CWL9</accession>
<keyword id="KW-0378">Hydrolase</keyword>
<sequence length="443" mass="50333">MESTLSLTIRSQWLERHDDEHKIRRDDHRSPFQRDRARILHSAAFRRLQAKTQVHGNSLEDFHRTRLTHSLEAAQLGTGIVAQIKKKQPEYRDLLPTDSLIDALCLAHDIGHPPYGHGGEVALNYMMRDHGGFEGNAQTFRIVTQLEPYTEHFGMNLSRRTLLGLIKYPAFISQTRAASQPAPVSHQRQIKAKQWSPAKGIYDCDKALFDWVLAPLSETDKQQLNAMRDCPHDALSHRKTRYKSLDCSIMELADDIAYGVHDLEDAIVLGLVTRSQWQEGAASQLADCGDPWFEKHISSIGEMLFSGQHHQRKDAIGGMVNALLTSIDVKPVDGEFESPLLAFNAYLDIGMEKALSILKHFVSQYVIQIPQVQIVEYKGQQIIMDLFEALSADPQRLLPLPTRHRWELAETDTSKMRVIADYISSMTDGHAQRLHQQLFSSHH</sequence>
<dbReference type="EMBL" id="AE016795">
    <property type="protein sequence ID" value="AAO08558.1"/>
    <property type="molecule type" value="Genomic_DNA"/>
</dbReference>
<dbReference type="RefSeq" id="WP_011078141.1">
    <property type="nucleotide sequence ID" value="NC_004459.3"/>
</dbReference>
<dbReference type="SMR" id="Q8CWL9"/>
<dbReference type="KEGG" id="vvu:VV1_0014"/>
<dbReference type="HOGENOM" id="CLU_028163_0_0_6"/>
<dbReference type="Proteomes" id="UP000002275">
    <property type="component" value="Chromosome 1"/>
</dbReference>
<dbReference type="GO" id="GO:0008832">
    <property type="term" value="F:dGTPase activity"/>
    <property type="evidence" value="ECO:0007669"/>
    <property type="project" value="TreeGrafter"/>
</dbReference>
<dbReference type="GO" id="GO:0006203">
    <property type="term" value="P:dGTP catabolic process"/>
    <property type="evidence" value="ECO:0007669"/>
    <property type="project" value="TreeGrafter"/>
</dbReference>
<dbReference type="CDD" id="cd00077">
    <property type="entry name" value="HDc"/>
    <property type="match status" value="1"/>
</dbReference>
<dbReference type="Gene3D" id="1.10.3210.10">
    <property type="entry name" value="Hypothetical protein af1432"/>
    <property type="match status" value="1"/>
</dbReference>
<dbReference type="HAMAP" id="MF_01212">
    <property type="entry name" value="dGTPase_type2"/>
    <property type="match status" value="1"/>
</dbReference>
<dbReference type="InterPro" id="IPR006261">
    <property type="entry name" value="dGTPase"/>
</dbReference>
<dbReference type="InterPro" id="IPR050135">
    <property type="entry name" value="dGTPase-like"/>
</dbReference>
<dbReference type="InterPro" id="IPR023023">
    <property type="entry name" value="dNTPase_2"/>
</dbReference>
<dbReference type="InterPro" id="IPR003607">
    <property type="entry name" value="HD/PDEase_dom"/>
</dbReference>
<dbReference type="InterPro" id="IPR006674">
    <property type="entry name" value="HD_domain"/>
</dbReference>
<dbReference type="InterPro" id="IPR026875">
    <property type="entry name" value="PHydrolase_assoc_dom"/>
</dbReference>
<dbReference type="NCBIfam" id="NF041026">
    <property type="entry name" value="antiphage_dGTPase"/>
    <property type="match status" value="1"/>
</dbReference>
<dbReference type="NCBIfam" id="TIGR01353">
    <property type="entry name" value="dGTP_triPase"/>
    <property type="match status" value="1"/>
</dbReference>
<dbReference type="NCBIfam" id="NF003701">
    <property type="entry name" value="PRK05318.1"/>
    <property type="match status" value="1"/>
</dbReference>
<dbReference type="PANTHER" id="PTHR11373:SF40">
    <property type="entry name" value="DEOXYGUANOSINETRIPHOSPHATE TRIPHOSPHOHYDROLASE-LIKE PROTEIN 2"/>
    <property type="match status" value="1"/>
</dbReference>
<dbReference type="PANTHER" id="PTHR11373">
    <property type="entry name" value="DEOXYNUCLEOSIDE TRIPHOSPHATE TRIPHOSPHOHYDROLASE"/>
    <property type="match status" value="1"/>
</dbReference>
<dbReference type="Pfam" id="PF01966">
    <property type="entry name" value="HD"/>
    <property type="match status" value="1"/>
</dbReference>
<dbReference type="Pfam" id="PF13286">
    <property type="entry name" value="HD_assoc"/>
    <property type="match status" value="1"/>
</dbReference>
<dbReference type="SMART" id="SM00471">
    <property type="entry name" value="HDc"/>
    <property type="match status" value="1"/>
</dbReference>
<dbReference type="SUPFAM" id="SSF109604">
    <property type="entry name" value="HD-domain/PDEase-like"/>
    <property type="match status" value="1"/>
</dbReference>
<dbReference type="PROSITE" id="PS51831">
    <property type="entry name" value="HD"/>
    <property type="match status" value="1"/>
</dbReference>